<reference key="1">
    <citation type="journal article" date="1993" name="Eur. J. Neurosci.">
        <title>An abundant mRNA of the embryonic brain persists at a high level in cerebellum, hippocampus and olfactory bulb during adulthood.</title>
        <authorList>
            <person name="Studler J.-M."/>
            <person name="Glowinski J."/>
            <person name="Levi-Strauss M."/>
        </authorList>
    </citation>
    <scope>NUCLEOTIDE SEQUENCE [MRNA]</scope>
    <scope>TISSUE SPECIFICITY</scope>
    <scope>DEVELOPMENTAL STAGE</scope>
    <source>
        <tissue>Brain</tissue>
    </source>
</reference>
<reference key="2">
    <citation type="submission" date="2000-08" db="EMBL/GenBank/DDBJ databases">
        <authorList>
            <person name="Adachi J."/>
            <person name="Aizawa K."/>
            <person name="Akahira S."/>
            <person name="Akimura T."/>
            <person name="Aono H."/>
            <person name="Arai A."/>
            <person name="Arakawa T."/>
            <person name="Carninci P."/>
            <person name="Fukuda S."/>
            <person name="Fukunishi Y."/>
            <person name="Furuno M."/>
            <person name="Hanagaki T."/>
            <person name="Hara A."/>
            <person name="Hayatsu N."/>
            <person name="Hiramoto K."/>
            <person name="Hiraoka T."/>
            <person name="Hori F."/>
            <person name="Imotani K."/>
            <person name="Ishii Y."/>
            <person name="Itoh M."/>
            <person name="Izawa M."/>
            <person name="Kato H."/>
            <person name="Kawai J."/>
            <person name="Kojima Y."/>
            <person name="Konno H."/>
            <person name="Kouda M."/>
            <person name="Koya S."/>
            <person name="Kurihara C."/>
            <person name="Matsuyama T."/>
            <person name="Miyazaki A."/>
            <person name="Nishi K."/>
            <person name="Nomura K."/>
            <person name="Numazaki R."/>
            <person name="Ohno M."/>
            <person name="Okazaki Y."/>
            <person name="Okido T."/>
            <person name="Owa C."/>
            <person name="Saito H."/>
            <person name="Saito R."/>
            <person name="Sakai C."/>
            <person name="Sakai K."/>
            <person name="Sano H."/>
            <person name="Sasaki D."/>
            <person name="Shibata K."/>
            <person name="Shibata Y."/>
            <person name="Shinagawa A."/>
            <person name="Shiraki T."/>
            <person name="Sogabe Y."/>
            <person name="Suzuki H."/>
            <person name="Tagami M."/>
            <person name="Tagawa A."/>
            <person name="Takahashi F."/>
            <person name="Tanaka T."/>
            <person name="Tejima Y."/>
            <person name="Toya T."/>
            <person name="Yamamura T."/>
            <person name="Yasunishi A."/>
            <person name="Yoshida K."/>
            <person name="Yoshino M."/>
            <person name="Muramatsu M."/>
            <person name="Hayashizaki Y."/>
        </authorList>
    </citation>
    <scope>NUCLEOTIDE SEQUENCE [MRNA]</scope>
    <source>
        <strain>C57BL/6J</strain>
        <tissue>Urinary bladder</tissue>
    </source>
</reference>
<reference key="3">
    <citation type="journal article" date="2004" name="Genome Res.">
        <title>The status, quality, and expansion of the NIH full-length cDNA project: the Mammalian Gene Collection (MGC).</title>
        <authorList>
            <consortium name="The MGC Project Team"/>
        </authorList>
    </citation>
    <scope>NUCLEOTIDE SEQUENCE [LARGE SCALE MRNA]</scope>
    <source>
        <strain>C57BL/6J</strain>
        <tissue>Brain</tissue>
    </source>
</reference>
<reference key="4">
    <citation type="journal article" date="2002" name="J. Clin. Invest.">
        <title>P311 induces a TGF-beta1-independent, nonfibrogenic myofibroblast phenotype.</title>
        <authorList>
            <person name="Pan D."/>
            <person name="Zhe X."/>
            <person name="Jakkaraju S."/>
            <person name="Taylor G.A."/>
            <person name="Schuger L."/>
        </authorList>
    </citation>
    <scope>FUNCTION</scope>
</reference>
<reference key="5">
    <citation type="journal article" date="2004" name="Biochem. Biophys. Res. Commun.">
        <title>P311 binds to the latency associated protein and downregulates the expression of TGF-beta1 and TGF-beta2.</title>
        <authorList>
            <person name="Paliwal S."/>
            <person name="Shi J."/>
            <person name="Dhru U."/>
            <person name="Zhou Y."/>
            <person name="Schuger L."/>
        </authorList>
    </citation>
    <scope>FUNCTION</scope>
    <scope>INTERACTION WITH TGFB1 AND TGFB2</scope>
</reference>
<reference key="6">
    <citation type="journal article" date="2006" name="Am. J. Respir. Cell Mol. Biol.">
        <title>Identification of P311 as a potential gene regulating alveolar generation.</title>
        <authorList>
            <person name="Zhao L."/>
            <person name="Leung J.K."/>
            <person name="Yamamoto H."/>
            <person name="Goswami S."/>
            <person name="Kheradmand F."/>
            <person name="Vu T.H."/>
        </authorList>
    </citation>
    <scope>POSSIBLE FUNCTION</scope>
    <scope>TISSUE SPECIFICITY</scope>
    <scope>DEVELOPMENTAL STAGE</scope>
    <scope>INDUCTION</scope>
</reference>
<reference key="7">
    <citation type="journal article" date="2006" name="Exp. Cell Res.">
        <title>P311-induced myofibroblasts exhibit ameboid-like migration through RalA activation.</title>
        <authorList>
            <person name="Shi J."/>
            <person name="Badri K.R."/>
            <person name="Choudhury R."/>
            <person name="Schuger L."/>
        </authorList>
    </citation>
    <scope>FUNCTION</scope>
</reference>
<reference key="8">
    <citation type="journal article" date="2008" name="Genes Brain Behav.">
        <title>Behavioral characterization of P311 knockout mice.</title>
        <authorList>
            <person name="Taylor G.A."/>
            <person name="Rodriguiz R.M."/>
            <person name="Greene R.I."/>
            <person name="Daniell X."/>
            <person name="Henry S.C."/>
            <person name="Crooks K.R."/>
            <person name="Kotloski R."/>
            <person name="Tessarollo L."/>
            <person name="Phillips L.E."/>
            <person name="Wetsel W.C."/>
        </authorList>
    </citation>
    <scope>DISRUPTION PHENOTYPE</scope>
</reference>
<reference key="9">
    <citation type="journal article" date="2008" name="J. Cell Sci.">
        <title>P311 functions in an alternative pathway of lipid accumulation that is induced by retinoic acid.</title>
        <authorList>
            <person name="Leung J.K."/>
            <person name="Cases S."/>
            <person name="Vu T.H."/>
        </authorList>
    </citation>
    <scope>FUNCTION</scope>
</reference>
<reference key="10">
    <citation type="journal article" date="2008" name="Mol. Pain">
        <title>Involvement of P311 in the affective, but not in the sensory component of pain.</title>
        <authorList>
            <person name="Sun Y.-G."/>
            <person name="Gao Y.-J."/>
            <person name="Zhao Z.-Q."/>
            <person name="Huang B."/>
            <person name="Yin J."/>
            <person name="Taylor G.A."/>
            <person name="Chen Z.-F."/>
        </authorList>
    </citation>
    <scope>DISRUPTION PHENOTYPE</scope>
</reference>
<protein>
    <recommendedName>
        <fullName>Neuronal regeneration-related protein</fullName>
    </recommendedName>
    <alternativeName>
        <fullName>Neuronal protein 3.1</fullName>
    </alternativeName>
    <alternativeName>
        <fullName>Protein p311</fullName>
    </alternativeName>
</protein>
<comment type="function">
    <text evidence="3 4 6 9">May have roles in cellular differentiation. Ectopic expression induces differentiation of fibroblast into myofibroblast and myofibroblast ameboid migration. Increases retinoic-acid regulation of lipid-droplet biogenesis. May also have neural functions. Promotes axonal regeneration and augments motility of gliomas. Down-regulates the expression of TGFB1 and TGFB2 but not of TGFB3. May play a role in the regulation of alveolar generation.</text>
</comment>
<comment type="subunit">
    <text evidence="1 4">Interacts with FLNA (By similarity). Interacts with the latency-associated peptides (LAP) of TGFB1 and TGFB2; the interaction results in a decrease in TGFB autoinduction.</text>
</comment>
<comment type="subcellular location">
    <subcellularLocation>
        <location evidence="1">Cytoplasm</location>
    </subcellularLocation>
</comment>
<comment type="tissue specificity">
    <text evidence="5 10">Expressed in brain and fetal lung.</text>
</comment>
<comment type="developmental stage">
    <text evidence="5 10">Expressed mainly in neurons belonging to a late migration wave. During adulthood, it persists at a high level in the granular layer of the cerebellum, the hippocampus and the olfactory bulb. In lung, detected at low levels at the pseudoglandular stage (14.5 dpc), with expression starting to increase at the beginning of distal lung development (16.5 dpc) and remaining at the same level during saccular development (18.5 dpc). The expression levels are highest at the beginning of and during alveolar development (P5-P14) before decreasing again to low levels at the end of alveolization (P30).</text>
</comment>
<comment type="induction">
    <text evidence="5">Down-regulated in lungs by dexamethasone treatment.</text>
</comment>
<comment type="PTM">
    <text evidence="1">Phosphorylated on Ser-59. Phosphorylation decreases stability and activity.</text>
</comment>
<comment type="disruption phenotype">
    <text evidence="7 8">Normal heat and mechanical sensitivity, as well as normal formalin-induced inflammatory pain. Reduced formalin-induced avoidance behavior, which reflects pain-related negative emotion, indicating a role in the affective, but not in the sensory component of the pain. Also exhibits altered behavioral responses in learning and memory.</text>
</comment>
<feature type="chain" id="PRO_0000057938" description="Neuronal regeneration-related protein">
    <location>
        <begin position="1"/>
        <end position="68"/>
    </location>
</feature>
<feature type="region of interest" description="Disordered" evidence="2">
    <location>
        <begin position="42"/>
        <end position="68"/>
    </location>
</feature>
<keyword id="KW-0963">Cytoplasm</keyword>
<keyword id="KW-0597">Phosphoprotein</keyword>
<keyword id="KW-1185">Reference proteome</keyword>
<proteinExistence type="evidence at protein level"/>
<gene>
    <name type="primary">Nrep</name>
    <name type="synonym">D0H4S114</name>
    <name type="synonym">P311</name>
</gene>
<dbReference type="EMBL" id="X70398">
    <property type="protein sequence ID" value="CAA49848.1"/>
    <property type="molecule type" value="mRNA"/>
</dbReference>
<dbReference type="EMBL" id="AK020629">
    <property type="protein sequence ID" value="BAB32157.1"/>
    <property type="molecule type" value="mRNA"/>
</dbReference>
<dbReference type="EMBL" id="BC054762">
    <property type="protein sequence ID" value="AAH54762.1"/>
    <property type="molecule type" value="mRNA"/>
</dbReference>
<dbReference type="CCDS" id="CCDS37756.1"/>
<dbReference type="PIR" id="S29993">
    <property type="entry name" value="S29993"/>
</dbReference>
<dbReference type="RefSeq" id="NP_001103458.1">
    <property type="nucleotide sequence ID" value="NM_001109988.1"/>
</dbReference>
<dbReference type="RefSeq" id="NP_001103459.1">
    <property type="nucleotide sequence ID" value="NM_001109989.2"/>
</dbReference>
<dbReference type="RefSeq" id="NP_001254646.1">
    <property type="nucleotide sequence ID" value="NM_001267717.1"/>
</dbReference>
<dbReference type="RefSeq" id="NP_444308.1">
    <property type="nucleotide sequence ID" value="NM_053078.4"/>
</dbReference>
<dbReference type="RefSeq" id="XP_030106348.1">
    <property type="nucleotide sequence ID" value="XM_030250488.2"/>
</dbReference>
<dbReference type="RefSeq" id="XP_036017057.1">
    <property type="nucleotide sequence ID" value="XM_036161164.1"/>
</dbReference>
<dbReference type="BioGRID" id="205307">
    <property type="interactions" value="2"/>
</dbReference>
<dbReference type="FunCoup" id="Q07475">
    <property type="interactions" value="912"/>
</dbReference>
<dbReference type="STRING" id="10090.ENSMUSP00000127787"/>
<dbReference type="PhosphoSitePlus" id="Q07475"/>
<dbReference type="PaxDb" id="10090-ENSMUSP00000058132"/>
<dbReference type="Antibodypedia" id="632">
    <property type="antibodies" value="114 antibodies from 24 providers"/>
</dbReference>
<dbReference type="DNASU" id="27528"/>
<dbReference type="Ensembl" id="ENSMUST00000051087.16">
    <property type="protein sequence ID" value="ENSMUSP00000058132.9"/>
    <property type="gene ID" value="ENSMUSG00000042834.16"/>
</dbReference>
<dbReference type="Ensembl" id="ENSMUST00000168890.2">
    <property type="protein sequence ID" value="ENSMUSP00000130297.2"/>
    <property type="gene ID" value="ENSMUSG00000042834.16"/>
</dbReference>
<dbReference type="Ensembl" id="ENSMUST00000171533.9">
    <property type="protein sequence ID" value="ENSMUSP00000127787.2"/>
    <property type="gene ID" value="ENSMUSG00000042834.16"/>
</dbReference>
<dbReference type="Ensembl" id="ENSMUST00000237066.2">
    <property type="protein sequence ID" value="ENSMUSP00000157912.2"/>
    <property type="gene ID" value="ENSMUSG00000042834.16"/>
</dbReference>
<dbReference type="GeneID" id="27528"/>
<dbReference type="KEGG" id="mmu:27528"/>
<dbReference type="UCSC" id="uc008ejt.2">
    <property type="organism name" value="mouse"/>
</dbReference>
<dbReference type="AGR" id="MGI:99444"/>
<dbReference type="CTD" id="9315"/>
<dbReference type="MGI" id="MGI:99444">
    <property type="gene designation" value="Nrep"/>
</dbReference>
<dbReference type="VEuPathDB" id="HostDB:ENSMUSG00000042834"/>
<dbReference type="eggNOG" id="ENOG502SFKT">
    <property type="taxonomic scope" value="Eukaryota"/>
</dbReference>
<dbReference type="GeneTree" id="ENSGT00390000016521"/>
<dbReference type="HOGENOM" id="CLU_204758_0_0_1"/>
<dbReference type="InParanoid" id="Q07475"/>
<dbReference type="OMA" id="EGRLTEX"/>
<dbReference type="OrthoDB" id="9383199at2759"/>
<dbReference type="PhylomeDB" id="Q07475"/>
<dbReference type="TreeFam" id="TF336368"/>
<dbReference type="BioGRID-ORCS" id="27528">
    <property type="hits" value="2 hits in 77 CRISPR screens"/>
</dbReference>
<dbReference type="ChiTaRS" id="Nrep">
    <property type="organism name" value="mouse"/>
</dbReference>
<dbReference type="PRO" id="PR:Q07475"/>
<dbReference type="Proteomes" id="UP000000589">
    <property type="component" value="Chromosome 18"/>
</dbReference>
<dbReference type="RNAct" id="Q07475">
    <property type="molecule type" value="protein"/>
</dbReference>
<dbReference type="Bgee" id="ENSMUSG00000042834">
    <property type="expression patterns" value="Expressed in external carotid artery and 263 other cell types or tissues"/>
</dbReference>
<dbReference type="ExpressionAtlas" id="Q07475">
    <property type="expression patterns" value="baseline and differential"/>
</dbReference>
<dbReference type="GO" id="GO:0005737">
    <property type="term" value="C:cytoplasm"/>
    <property type="evidence" value="ECO:0007669"/>
    <property type="project" value="UniProtKB-SubCell"/>
</dbReference>
<dbReference type="GO" id="GO:0031103">
    <property type="term" value="P:axon regeneration"/>
    <property type="evidence" value="ECO:0007669"/>
    <property type="project" value="Ensembl"/>
</dbReference>
<dbReference type="GO" id="GO:0045664">
    <property type="term" value="P:regulation of neuron differentiation"/>
    <property type="evidence" value="ECO:0007669"/>
    <property type="project" value="Ensembl"/>
</dbReference>
<dbReference type="GO" id="GO:0017015">
    <property type="term" value="P:regulation of transforming growth factor beta receptor signaling pathway"/>
    <property type="evidence" value="ECO:0000314"/>
    <property type="project" value="MGI"/>
</dbReference>
<dbReference type="DisProt" id="DP03067"/>
<dbReference type="InterPro" id="IPR024417">
    <property type="entry name" value="Neuronal_3.1"/>
</dbReference>
<dbReference type="PANTHER" id="PTHR17102">
    <property type="entry name" value="NEURONAL REGENERATION-RELATED PROTEIN"/>
    <property type="match status" value="1"/>
</dbReference>
<dbReference type="PANTHER" id="PTHR17102:SF4">
    <property type="entry name" value="NEURONAL REGENERATION-RELATED PROTEIN"/>
    <property type="match status" value="1"/>
</dbReference>
<dbReference type="Pfam" id="PF11092">
    <property type="entry name" value="Alveol-reg_P311"/>
    <property type="match status" value="1"/>
</dbReference>
<evidence type="ECO:0000250" key="1"/>
<evidence type="ECO:0000256" key="2">
    <source>
        <dbReference type="SAM" id="MobiDB-lite"/>
    </source>
</evidence>
<evidence type="ECO:0000269" key="3">
    <source>
    </source>
</evidence>
<evidence type="ECO:0000269" key="4">
    <source>
    </source>
</evidence>
<evidence type="ECO:0000269" key="5">
    <source>
    </source>
</evidence>
<evidence type="ECO:0000269" key="6">
    <source>
    </source>
</evidence>
<evidence type="ECO:0000269" key="7">
    <source>
    </source>
</evidence>
<evidence type="ECO:0000269" key="8">
    <source>
    </source>
</evidence>
<evidence type="ECO:0000269" key="9">
    <source>
    </source>
</evidence>
<evidence type="ECO:0000269" key="10">
    <source>
    </source>
</evidence>
<sequence>MVYYPELLVWVSQEPFAYKEMEGGLIKGRLPVPKEVNRKKMEETGAASLTPPGSREFTSPATSYLHPF</sequence>
<accession>Q07475</accession>
<organism>
    <name type="scientific">Mus musculus</name>
    <name type="common">Mouse</name>
    <dbReference type="NCBI Taxonomy" id="10090"/>
    <lineage>
        <taxon>Eukaryota</taxon>
        <taxon>Metazoa</taxon>
        <taxon>Chordata</taxon>
        <taxon>Craniata</taxon>
        <taxon>Vertebrata</taxon>
        <taxon>Euteleostomi</taxon>
        <taxon>Mammalia</taxon>
        <taxon>Eutheria</taxon>
        <taxon>Euarchontoglires</taxon>
        <taxon>Glires</taxon>
        <taxon>Rodentia</taxon>
        <taxon>Myomorpha</taxon>
        <taxon>Muroidea</taxon>
        <taxon>Muridae</taxon>
        <taxon>Murinae</taxon>
        <taxon>Mus</taxon>
        <taxon>Mus</taxon>
    </lineage>
</organism>
<name>NREP_MOUSE</name>